<gene>
    <name evidence="1" type="primary">atpB</name>
</gene>
<reference key="1">
    <citation type="journal article" date="2002" name="Syst. Biol.">
        <title>A molecular phylogenetic study of the Palmae (Arecaceae) based on atpB, rbcL, and 18S nrDNA sequences.</title>
        <authorList>
            <person name="Hahn W.J."/>
        </authorList>
    </citation>
    <scope>NUCLEOTIDE SEQUENCE [GENOMIC DNA]</scope>
</reference>
<comment type="function">
    <text evidence="1">Produces ATP from ADP in the presence of a proton gradient across the membrane. The catalytic sites are hosted primarily by the beta subunits.</text>
</comment>
<comment type="catalytic activity">
    <reaction evidence="1">
        <text>ATP + H2O + 4 H(+)(in) = ADP + phosphate + 5 H(+)(out)</text>
        <dbReference type="Rhea" id="RHEA:57720"/>
        <dbReference type="ChEBI" id="CHEBI:15377"/>
        <dbReference type="ChEBI" id="CHEBI:15378"/>
        <dbReference type="ChEBI" id="CHEBI:30616"/>
        <dbReference type="ChEBI" id="CHEBI:43474"/>
        <dbReference type="ChEBI" id="CHEBI:456216"/>
        <dbReference type="EC" id="7.1.2.2"/>
    </reaction>
</comment>
<comment type="subunit">
    <text evidence="1">F-type ATPases have 2 components, CF(1) - the catalytic core - and CF(0) - the membrane proton channel. CF(1) has five subunits: alpha(3), beta(3), gamma(1), delta(1), epsilon(1). CF(0) has four main subunits: a(1), b(1), b'(1) and c(9-12).</text>
</comment>
<comment type="subcellular location">
    <subcellularLocation>
        <location evidence="1">Plastid</location>
        <location evidence="1">Chloroplast thylakoid membrane</location>
        <topology evidence="1">Peripheral membrane protein</topology>
    </subcellularLocation>
</comment>
<comment type="similarity">
    <text evidence="1">Belongs to the ATPase alpha/beta chains family.</text>
</comment>
<protein>
    <recommendedName>
        <fullName evidence="1">ATP synthase subunit beta, chloroplastic</fullName>
        <ecNumber evidence="1">7.1.2.2</ecNumber>
    </recommendedName>
    <alternativeName>
        <fullName evidence="1">ATP synthase F1 sector subunit beta</fullName>
    </alternativeName>
    <alternativeName>
        <fullName evidence="1">F-ATPase subunit beta</fullName>
    </alternativeName>
</protein>
<accession>Q9BA92</accession>
<geneLocation type="chloroplast"/>
<keyword id="KW-0066">ATP synthesis</keyword>
<keyword id="KW-0067">ATP-binding</keyword>
<keyword id="KW-0139">CF(1)</keyword>
<keyword id="KW-0150">Chloroplast</keyword>
<keyword id="KW-0375">Hydrogen ion transport</keyword>
<keyword id="KW-0406">Ion transport</keyword>
<keyword id="KW-0472">Membrane</keyword>
<keyword id="KW-0547">Nucleotide-binding</keyword>
<keyword id="KW-0934">Plastid</keyword>
<keyword id="KW-0793">Thylakoid</keyword>
<keyword id="KW-1278">Translocase</keyword>
<keyword id="KW-0813">Transport</keyword>
<dbReference type="EC" id="7.1.2.2" evidence="1"/>
<dbReference type="EMBL" id="AY012403">
    <property type="protein sequence ID" value="AAK14658.1"/>
    <property type="molecule type" value="Genomic_DNA"/>
</dbReference>
<dbReference type="SMR" id="Q9BA92"/>
<dbReference type="GO" id="GO:0009535">
    <property type="term" value="C:chloroplast thylakoid membrane"/>
    <property type="evidence" value="ECO:0007669"/>
    <property type="project" value="UniProtKB-SubCell"/>
</dbReference>
<dbReference type="GO" id="GO:0005739">
    <property type="term" value="C:mitochondrion"/>
    <property type="evidence" value="ECO:0007669"/>
    <property type="project" value="GOC"/>
</dbReference>
<dbReference type="GO" id="GO:0045259">
    <property type="term" value="C:proton-transporting ATP synthase complex"/>
    <property type="evidence" value="ECO:0007669"/>
    <property type="project" value="UniProtKB-KW"/>
</dbReference>
<dbReference type="GO" id="GO:0005524">
    <property type="term" value="F:ATP binding"/>
    <property type="evidence" value="ECO:0007669"/>
    <property type="project" value="UniProtKB-UniRule"/>
</dbReference>
<dbReference type="GO" id="GO:0016887">
    <property type="term" value="F:ATP hydrolysis activity"/>
    <property type="evidence" value="ECO:0007669"/>
    <property type="project" value="InterPro"/>
</dbReference>
<dbReference type="GO" id="GO:0046933">
    <property type="term" value="F:proton-transporting ATP synthase activity, rotational mechanism"/>
    <property type="evidence" value="ECO:0007669"/>
    <property type="project" value="UniProtKB-UniRule"/>
</dbReference>
<dbReference type="GO" id="GO:0042776">
    <property type="term" value="P:proton motive force-driven mitochondrial ATP synthesis"/>
    <property type="evidence" value="ECO:0007669"/>
    <property type="project" value="TreeGrafter"/>
</dbReference>
<dbReference type="CDD" id="cd18110">
    <property type="entry name" value="ATP-synt_F1_beta_C"/>
    <property type="match status" value="1"/>
</dbReference>
<dbReference type="CDD" id="cd18115">
    <property type="entry name" value="ATP-synt_F1_beta_N"/>
    <property type="match status" value="1"/>
</dbReference>
<dbReference type="CDD" id="cd01133">
    <property type="entry name" value="F1-ATPase_beta_CD"/>
    <property type="match status" value="1"/>
</dbReference>
<dbReference type="FunFam" id="1.10.1140.10:FF:000001">
    <property type="entry name" value="ATP synthase subunit beta"/>
    <property type="match status" value="1"/>
</dbReference>
<dbReference type="FunFam" id="3.40.50.12240:FF:000006">
    <property type="entry name" value="ATP synthase subunit beta"/>
    <property type="match status" value="1"/>
</dbReference>
<dbReference type="FunFam" id="3.40.50.300:FF:000004">
    <property type="entry name" value="ATP synthase subunit beta"/>
    <property type="match status" value="1"/>
</dbReference>
<dbReference type="FunFam" id="2.40.10.170:FF:000002">
    <property type="entry name" value="ATP synthase subunit beta, chloroplastic"/>
    <property type="match status" value="1"/>
</dbReference>
<dbReference type="Gene3D" id="2.40.10.170">
    <property type="match status" value="1"/>
</dbReference>
<dbReference type="Gene3D" id="1.10.1140.10">
    <property type="entry name" value="Bovine Mitochondrial F1-atpase, Atp Synthase Beta Chain, Chain D, domain 3"/>
    <property type="match status" value="1"/>
</dbReference>
<dbReference type="Gene3D" id="3.40.50.300">
    <property type="entry name" value="P-loop containing nucleotide triphosphate hydrolases"/>
    <property type="match status" value="1"/>
</dbReference>
<dbReference type="HAMAP" id="MF_01347">
    <property type="entry name" value="ATP_synth_beta_bact"/>
    <property type="match status" value="1"/>
</dbReference>
<dbReference type="InterPro" id="IPR003593">
    <property type="entry name" value="AAA+_ATPase"/>
</dbReference>
<dbReference type="InterPro" id="IPR055190">
    <property type="entry name" value="ATP-synt_VA_C"/>
</dbReference>
<dbReference type="InterPro" id="IPR005722">
    <property type="entry name" value="ATP_synth_F1_bsu"/>
</dbReference>
<dbReference type="InterPro" id="IPR020003">
    <property type="entry name" value="ATPase_a/bsu_AS"/>
</dbReference>
<dbReference type="InterPro" id="IPR050053">
    <property type="entry name" value="ATPase_alpha/beta_chains"/>
</dbReference>
<dbReference type="InterPro" id="IPR004100">
    <property type="entry name" value="ATPase_F1/V1/A1_a/bsu_N"/>
</dbReference>
<dbReference type="InterPro" id="IPR036121">
    <property type="entry name" value="ATPase_F1/V1/A1_a/bsu_N_sf"/>
</dbReference>
<dbReference type="InterPro" id="IPR000194">
    <property type="entry name" value="ATPase_F1/V1/A1_a/bsu_nucl-bd"/>
</dbReference>
<dbReference type="InterPro" id="IPR024034">
    <property type="entry name" value="ATPase_F1/V1_b/a_C"/>
</dbReference>
<dbReference type="InterPro" id="IPR027417">
    <property type="entry name" value="P-loop_NTPase"/>
</dbReference>
<dbReference type="NCBIfam" id="TIGR01039">
    <property type="entry name" value="atpD"/>
    <property type="match status" value="1"/>
</dbReference>
<dbReference type="PANTHER" id="PTHR15184">
    <property type="entry name" value="ATP SYNTHASE"/>
    <property type="match status" value="1"/>
</dbReference>
<dbReference type="PANTHER" id="PTHR15184:SF71">
    <property type="entry name" value="ATP SYNTHASE SUBUNIT BETA, MITOCHONDRIAL"/>
    <property type="match status" value="1"/>
</dbReference>
<dbReference type="Pfam" id="PF00006">
    <property type="entry name" value="ATP-synt_ab"/>
    <property type="match status" value="1"/>
</dbReference>
<dbReference type="Pfam" id="PF02874">
    <property type="entry name" value="ATP-synt_ab_N"/>
    <property type="match status" value="1"/>
</dbReference>
<dbReference type="Pfam" id="PF22919">
    <property type="entry name" value="ATP-synt_VA_C"/>
    <property type="match status" value="1"/>
</dbReference>
<dbReference type="SMART" id="SM00382">
    <property type="entry name" value="AAA"/>
    <property type="match status" value="1"/>
</dbReference>
<dbReference type="SUPFAM" id="SSF47917">
    <property type="entry name" value="C-terminal domain of alpha and beta subunits of F1 ATP synthase"/>
    <property type="match status" value="1"/>
</dbReference>
<dbReference type="SUPFAM" id="SSF50615">
    <property type="entry name" value="N-terminal domain of alpha and beta subunits of F1 ATP synthase"/>
    <property type="match status" value="1"/>
</dbReference>
<dbReference type="SUPFAM" id="SSF52540">
    <property type="entry name" value="P-loop containing nucleoside triphosphate hydrolases"/>
    <property type="match status" value="1"/>
</dbReference>
<dbReference type="PROSITE" id="PS00152">
    <property type="entry name" value="ATPASE_ALPHA_BETA"/>
    <property type="match status" value="1"/>
</dbReference>
<organism>
    <name type="scientific">Trachycarpus fortunei</name>
    <name type="common">Chinese windmill palm</name>
    <dbReference type="NCBI Taxonomy" id="14027"/>
    <lineage>
        <taxon>Eukaryota</taxon>
        <taxon>Viridiplantae</taxon>
        <taxon>Streptophyta</taxon>
        <taxon>Embryophyta</taxon>
        <taxon>Tracheophyta</taxon>
        <taxon>Spermatophyta</taxon>
        <taxon>Magnoliopsida</taxon>
        <taxon>Liliopsida</taxon>
        <taxon>Arecaceae</taxon>
        <taxon>Coryphoideae</taxon>
        <taxon>Livistoneae</taxon>
        <taxon>Rhapidineae</taxon>
        <taxon>Trachycarpus</taxon>
    </lineage>
</organism>
<sequence>MRTNPTTSSPVVSTLEEKNLGRIAQIIGPVLDVVFPPGKMPNIYNALVVKGRDTVQINVTCEVQQLLGNNRVRAVAMSATDGLMRGMEVIDTGAPLSVPVGGATLGRIFNVLGEPVDNLGPVDTRTTSPIHRSAPAFIQLDTKFSIFETGIKVVDLLAPYRRGGKIGLFGGAGVGKTVLIMELINNIAKAHGGVSVFGGVGERTREGNDLYMEMKESGVINEKNIAESKVALVYGQMNEPPGARMRVGLTALTMAEYFRDVNEQDVLLFIDNIFRFVQAGSEVSALLGRMPSAVGYQPTLSTEMGSLQERITSTKEGSITSIQAVYVPADDLTDPAPATTFAHLDATTVLSRVLAAKGIYPAVDPLDSTSTMLQPRIVGEEHYETAQRVKQTSQRYKELQDIIAILGLDELSEEDRLTVARARKIERFLSQPFFVAEVFTGSPGKYVGLGETIRGFQLILSGELDGLPEQAFYLVGNIDEATAKAMNLEVESKLKK</sequence>
<name>ATPB_TRAFO</name>
<feature type="chain" id="PRO_0000254529" description="ATP synthase subunit beta, chloroplastic">
    <location>
        <begin position="1"/>
        <end position="496"/>
    </location>
</feature>
<feature type="binding site" evidence="1">
    <location>
        <begin position="170"/>
        <end position="177"/>
    </location>
    <ligand>
        <name>ATP</name>
        <dbReference type="ChEBI" id="CHEBI:30616"/>
    </ligand>
</feature>
<evidence type="ECO:0000255" key="1">
    <source>
        <dbReference type="HAMAP-Rule" id="MF_01347"/>
    </source>
</evidence>
<proteinExistence type="inferred from homology"/>